<feature type="chain" id="PRO_1000185387" description="Phosphoglucosamine mutase">
    <location>
        <begin position="1"/>
        <end position="450"/>
    </location>
</feature>
<feature type="active site" description="Phosphoserine intermediate" evidence="1">
    <location>
        <position position="101"/>
    </location>
</feature>
<feature type="binding site" description="via phosphate group" evidence="1">
    <location>
        <position position="101"/>
    </location>
    <ligand>
        <name>Mg(2+)</name>
        <dbReference type="ChEBI" id="CHEBI:18420"/>
    </ligand>
</feature>
<feature type="binding site" evidence="1">
    <location>
        <position position="240"/>
    </location>
    <ligand>
        <name>Mg(2+)</name>
        <dbReference type="ChEBI" id="CHEBI:18420"/>
    </ligand>
</feature>
<feature type="binding site" evidence="1">
    <location>
        <position position="242"/>
    </location>
    <ligand>
        <name>Mg(2+)</name>
        <dbReference type="ChEBI" id="CHEBI:18420"/>
    </ligand>
</feature>
<feature type="binding site" evidence="1">
    <location>
        <position position="244"/>
    </location>
    <ligand>
        <name>Mg(2+)</name>
        <dbReference type="ChEBI" id="CHEBI:18420"/>
    </ligand>
</feature>
<feature type="modified residue" description="Phosphoserine" evidence="1">
    <location>
        <position position="101"/>
    </location>
</feature>
<comment type="function">
    <text evidence="1">Catalyzes the conversion of glucosamine-6-phosphate to glucosamine-1-phosphate.</text>
</comment>
<comment type="catalytic activity">
    <reaction evidence="1">
        <text>alpha-D-glucosamine 1-phosphate = D-glucosamine 6-phosphate</text>
        <dbReference type="Rhea" id="RHEA:23424"/>
        <dbReference type="ChEBI" id="CHEBI:58516"/>
        <dbReference type="ChEBI" id="CHEBI:58725"/>
        <dbReference type="EC" id="5.4.2.10"/>
    </reaction>
</comment>
<comment type="cofactor">
    <cofactor evidence="1">
        <name>Mg(2+)</name>
        <dbReference type="ChEBI" id="CHEBI:18420"/>
    </cofactor>
    <text evidence="1">Binds 1 Mg(2+) ion per subunit.</text>
</comment>
<comment type="PTM">
    <text evidence="1">Activated by phosphorylation.</text>
</comment>
<comment type="similarity">
    <text evidence="1">Belongs to the phosphohexose mutase family.</text>
</comment>
<dbReference type="EC" id="5.4.2.10" evidence="1"/>
<dbReference type="EMBL" id="CP000919">
    <property type="protein sequence ID" value="ACO18279.1"/>
    <property type="molecule type" value="Genomic_DNA"/>
</dbReference>
<dbReference type="RefSeq" id="WP_000521410.1">
    <property type="nucleotide sequence ID" value="NC_012466.1"/>
</dbReference>
<dbReference type="SMR" id="C1CFE3"/>
<dbReference type="KEGG" id="sjj:SPJ_1466"/>
<dbReference type="HOGENOM" id="CLU_016950_7_0_9"/>
<dbReference type="Proteomes" id="UP000002206">
    <property type="component" value="Chromosome"/>
</dbReference>
<dbReference type="GO" id="GO:0005829">
    <property type="term" value="C:cytosol"/>
    <property type="evidence" value="ECO:0007669"/>
    <property type="project" value="TreeGrafter"/>
</dbReference>
<dbReference type="GO" id="GO:0000287">
    <property type="term" value="F:magnesium ion binding"/>
    <property type="evidence" value="ECO:0007669"/>
    <property type="project" value="UniProtKB-UniRule"/>
</dbReference>
<dbReference type="GO" id="GO:0008966">
    <property type="term" value="F:phosphoglucosamine mutase activity"/>
    <property type="evidence" value="ECO:0007669"/>
    <property type="project" value="UniProtKB-UniRule"/>
</dbReference>
<dbReference type="GO" id="GO:0004615">
    <property type="term" value="F:phosphomannomutase activity"/>
    <property type="evidence" value="ECO:0007669"/>
    <property type="project" value="TreeGrafter"/>
</dbReference>
<dbReference type="GO" id="GO:0005975">
    <property type="term" value="P:carbohydrate metabolic process"/>
    <property type="evidence" value="ECO:0007669"/>
    <property type="project" value="InterPro"/>
</dbReference>
<dbReference type="GO" id="GO:0009252">
    <property type="term" value="P:peptidoglycan biosynthetic process"/>
    <property type="evidence" value="ECO:0007669"/>
    <property type="project" value="TreeGrafter"/>
</dbReference>
<dbReference type="GO" id="GO:0006048">
    <property type="term" value="P:UDP-N-acetylglucosamine biosynthetic process"/>
    <property type="evidence" value="ECO:0007669"/>
    <property type="project" value="TreeGrafter"/>
</dbReference>
<dbReference type="CDD" id="cd05802">
    <property type="entry name" value="GlmM"/>
    <property type="match status" value="1"/>
</dbReference>
<dbReference type="FunFam" id="3.30.310.50:FF:000001">
    <property type="entry name" value="Phosphoglucosamine mutase"/>
    <property type="match status" value="1"/>
</dbReference>
<dbReference type="FunFam" id="3.40.120.10:FF:000001">
    <property type="entry name" value="Phosphoglucosamine mutase"/>
    <property type="match status" value="1"/>
</dbReference>
<dbReference type="FunFam" id="3.40.120.10:FF:000002">
    <property type="entry name" value="Phosphoglucosamine mutase"/>
    <property type="match status" value="1"/>
</dbReference>
<dbReference type="Gene3D" id="3.40.120.10">
    <property type="entry name" value="Alpha-D-Glucose-1,6-Bisphosphate, subunit A, domain 3"/>
    <property type="match status" value="3"/>
</dbReference>
<dbReference type="Gene3D" id="3.30.310.50">
    <property type="entry name" value="Alpha-D-phosphohexomutase, C-terminal domain"/>
    <property type="match status" value="1"/>
</dbReference>
<dbReference type="HAMAP" id="MF_01554_B">
    <property type="entry name" value="GlmM_B"/>
    <property type="match status" value="1"/>
</dbReference>
<dbReference type="InterPro" id="IPR005844">
    <property type="entry name" value="A-D-PHexomutase_a/b/a-I"/>
</dbReference>
<dbReference type="InterPro" id="IPR016055">
    <property type="entry name" value="A-D-PHexomutase_a/b/a-I/II/III"/>
</dbReference>
<dbReference type="InterPro" id="IPR005845">
    <property type="entry name" value="A-D-PHexomutase_a/b/a-II"/>
</dbReference>
<dbReference type="InterPro" id="IPR005846">
    <property type="entry name" value="A-D-PHexomutase_a/b/a-III"/>
</dbReference>
<dbReference type="InterPro" id="IPR005843">
    <property type="entry name" value="A-D-PHexomutase_C"/>
</dbReference>
<dbReference type="InterPro" id="IPR036900">
    <property type="entry name" value="A-D-PHexomutase_C_sf"/>
</dbReference>
<dbReference type="InterPro" id="IPR016066">
    <property type="entry name" value="A-D-PHexomutase_CS"/>
</dbReference>
<dbReference type="InterPro" id="IPR005841">
    <property type="entry name" value="Alpha-D-phosphohexomutase_SF"/>
</dbReference>
<dbReference type="InterPro" id="IPR006352">
    <property type="entry name" value="GlmM_bact"/>
</dbReference>
<dbReference type="InterPro" id="IPR050060">
    <property type="entry name" value="Phosphoglucosamine_mutase"/>
</dbReference>
<dbReference type="NCBIfam" id="TIGR01455">
    <property type="entry name" value="glmM"/>
    <property type="match status" value="1"/>
</dbReference>
<dbReference type="PANTHER" id="PTHR42946:SF1">
    <property type="entry name" value="PHOSPHOGLUCOMUTASE (ALPHA-D-GLUCOSE-1,6-BISPHOSPHATE-DEPENDENT)"/>
    <property type="match status" value="1"/>
</dbReference>
<dbReference type="PANTHER" id="PTHR42946">
    <property type="entry name" value="PHOSPHOHEXOSE MUTASE"/>
    <property type="match status" value="1"/>
</dbReference>
<dbReference type="Pfam" id="PF02878">
    <property type="entry name" value="PGM_PMM_I"/>
    <property type="match status" value="1"/>
</dbReference>
<dbReference type="Pfam" id="PF02879">
    <property type="entry name" value="PGM_PMM_II"/>
    <property type="match status" value="1"/>
</dbReference>
<dbReference type="Pfam" id="PF02880">
    <property type="entry name" value="PGM_PMM_III"/>
    <property type="match status" value="1"/>
</dbReference>
<dbReference type="Pfam" id="PF00408">
    <property type="entry name" value="PGM_PMM_IV"/>
    <property type="match status" value="1"/>
</dbReference>
<dbReference type="PRINTS" id="PR00509">
    <property type="entry name" value="PGMPMM"/>
</dbReference>
<dbReference type="SUPFAM" id="SSF55957">
    <property type="entry name" value="Phosphoglucomutase, C-terminal domain"/>
    <property type="match status" value="1"/>
</dbReference>
<dbReference type="SUPFAM" id="SSF53738">
    <property type="entry name" value="Phosphoglucomutase, first 3 domains"/>
    <property type="match status" value="3"/>
</dbReference>
<dbReference type="PROSITE" id="PS00710">
    <property type="entry name" value="PGM_PMM"/>
    <property type="match status" value="1"/>
</dbReference>
<proteinExistence type="inferred from homology"/>
<protein>
    <recommendedName>
        <fullName evidence="1">Phosphoglucosamine mutase</fullName>
        <ecNumber evidence="1">5.4.2.10</ecNumber>
    </recommendedName>
</protein>
<gene>
    <name evidence="1" type="primary">glmM</name>
    <name type="ordered locus">SPJ_1466</name>
</gene>
<keyword id="KW-0413">Isomerase</keyword>
<keyword id="KW-0460">Magnesium</keyword>
<keyword id="KW-0479">Metal-binding</keyword>
<keyword id="KW-0597">Phosphoprotein</keyword>
<name>GLMM_STRZJ</name>
<accession>C1CFE3</accession>
<organism>
    <name type="scientific">Streptococcus pneumoniae (strain JJA)</name>
    <dbReference type="NCBI Taxonomy" id="488222"/>
    <lineage>
        <taxon>Bacteria</taxon>
        <taxon>Bacillati</taxon>
        <taxon>Bacillota</taxon>
        <taxon>Bacilli</taxon>
        <taxon>Lactobacillales</taxon>
        <taxon>Streptococcaceae</taxon>
        <taxon>Streptococcus</taxon>
    </lineage>
</organism>
<sequence length="450" mass="48124">MGKYFGTDGVRGEANLELTPELAFKLGRFGGYVLSQHETEAPKVFVGRDTRISGEMLESALVAGLLSVGIHVYKLGVLATPAVAYLVETEGASAGVMISASHNPALDNGIKFFGGDGFKLDDEKEAEIEALLDAEEDTLPRPSAEGLGILVDYPEGLRKYEGYLVSTGTPLDGMKVALDTANGAASTSARQIFADLGAQLTVIGETPDGLNINLNVGSTHPEALQEVVKESGSAIGLAFDGDSDRLIAVDENGDIVDGDKIMYIIGKYLSEKGQLAQNTIVTTVMSNLGFHKALNREGINKAVTAVGDRYVVEEMRKSGYNLGGEQSGHVILMDYNTTGDGQLSAVQLTKIMKETGKSLSELAAEVTIYPQKLVNIRVENVMKEKAMEVPAIKAIIEKMEEEMAGNGRILVRPSGTEPLLRVMAEAPTTEEVDYYVDTITDVVRAEIGID</sequence>
<reference key="1">
    <citation type="journal article" date="2010" name="Genome Biol.">
        <title>Structure and dynamics of the pan-genome of Streptococcus pneumoniae and closely related species.</title>
        <authorList>
            <person name="Donati C."/>
            <person name="Hiller N.L."/>
            <person name="Tettelin H."/>
            <person name="Muzzi A."/>
            <person name="Croucher N.J."/>
            <person name="Angiuoli S.V."/>
            <person name="Oggioni M."/>
            <person name="Dunning Hotopp J.C."/>
            <person name="Hu F.Z."/>
            <person name="Riley D.R."/>
            <person name="Covacci A."/>
            <person name="Mitchell T.J."/>
            <person name="Bentley S.D."/>
            <person name="Kilian M."/>
            <person name="Ehrlich G.D."/>
            <person name="Rappuoli R."/>
            <person name="Moxon E.R."/>
            <person name="Masignani V."/>
        </authorList>
    </citation>
    <scope>NUCLEOTIDE SEQUENCE [LARGE SCALE GENOMIC DNA]</scope>
    <source>
        <strain>JJA</strain>
    </source>
</reference>
<evidence type="ECO:0000255" key="1">
    <source>
        <dbReference type="HAMAP-Rule" id="MF_01554"/>
    </source>
</evidence>